<dbReference type="EMBL" id="AF081781">
    <property type="protein sequence ID" value="AAC31961.1"/>
    <property type="molecule type" value="mRNA"/>
</dbReference>
<dbReference type="RefSeq" id="NP_001009440.1">
    <property type="nucleotide sequence ID" value="NM_001009440.1"/>
</dbReference>
<dbReference type="SMR" id="P61268"/>
<dbReference type="STRING" id="9940.ENSOARP00000008892"/>
<dbReference type="PaxDb" id="9940-ENSOARP00000008892"/>
<dbReference type="Ensembl" id="ENSOART00040030786">
    <property type="protein sequence ID" value="ENSOARP00040015723"/>
    <property type="gene ID" value="ENSOARG00040018578"/>
</dbReference>
<dbReference type="Ensembl" id="ENSOART00180052615">
    <property type="protein sequence ID" value="ENSOARP00180027533"/>
    <property type="gene ID" value="ENSOARG00180031465"/>
</dbReference>
<dbReference type="Ensembl" id="ENSOART00215057326">
    <property type="protein sequence ID" value="ENSOARP00215030150"/>
    <property type="gene ID" value="ENSOARG00215034130"/>
</dbReference>
<dbReference type="Ensembl" id="ENSOART00220079951">
    <property type="protein sequence ID" value="ENSOARP00220042901"/>
    <property type="gene ID" value="ENSOARG00220047988"/>
</dbReference>
<dbReference type="Ensembl" id="ENSOART00225014270">
    <property type="protein sequence ID" value="ENSOARP00225006732"/>
    <property type="gene ID" value="ENSOARG00225008703"/>
</dbReference>
<dbReference type="GeneID" id="443479"/>
<dbReference type="KEGG" id="oas:443479"/>
<dbReference type="CTD" id="112755"/>
<dbReference type="eggNOG" id="KOG0810">
    <property type="taxonomic scope" value="Eukaryota"/>
</dbReference>
<dbReference type="OrthoDB" id="10255013at2759"/>
<dbReference type="Proteomes" id="UP000002356">
    <property type="component" value="Unplaced"/>
</dbReference>
<dbReference type="GO" id="GO:0030424">
    <property type="term" value="C:axon"/>
    <property type="evidence" value="ECO:0007669"/>
    <property type="project" value="Ensembl"/>
</dbReference>
<dbReference type="GO" id="GO:0031965">
    <property type="term" value="C:nuclear membrane"/>
    <property type="evidence" value="ECO:0007669"/>
    <property type="project" value="Ensembl"/>
</dbReference>
<dbReference type="GO" id="GO:0048787">
    <property type="term" value="C:presynaptic active zone membrane"/>
    <property type="evidence" value="ECO:0007669"/>
    <property type="project" value="TreeGrafter"/>
</dbReference>
<dbReference type="GO" id="GO:0030672">
    <property type="term" value="C:synaptic vesicle membrane"/>
    <property type="evidence" value="ECO:0007669"/>
    <property type="project" value="Ensembl"/>
</dbReference>
<dbReference type="GO" id="GO:0070044">
    <property type="term" value="C:synaptobrevin 2-SNAP-25-syntaxin-1a complex"/>
    <property type="evidence" value="ECO:0007669"/>
    <property type="project" value="Ensembl"/>
</dbReference>
<dbReference type="GO" id="GO:0019855">
    <property type="term" value="F:calcium channel inhibitor activity"/>
    <property type="evidence" value="ECO:0007669"/>
    <property type="project" value="Ensembl"/>
</dbReference>
<dbReference type="GO" id="GO:0019869">
    <property type="term" value="F:chloride channel inhibitor activity"/>
    <property type="evidence" value="ECO:0007669"/>
    <property type="project" value="Ensembl"/>
</dbReference>
<dbReference type="GO" id="GO:0042802">
    <property type="term" value="F:identical protein binding"/>
    <property type="evidence" value="ECO:0007669"/>
    <property type="project" value="Ensembl"/>
</dbReference>
<dbReference type="GO" id="GO:0019900">
    <property type="term" value="F:kinase binding"/>
    <property type="evidence" value="ECO:0007669"/>
    <property type="project" value="Ensembl"/>
</dbReference>
<dbReference type="GO" id="GO:0005484">
    <property type="term" value="F:SNAP receptor activity"/>
    <property type="evidence" value="ECO:0007669"/>
    <property type="project" value="InterPro"/>
</dbReference>
<dbReference type="GO" id="GO:0000149">
    <property type="term" value="F:SNARE binding"/>
    <property type="evidence" value="ECO:0007669"/>
    <property type="project" value="Ensembl"/>
</dbReference>
<dbReference type="GO" id="GO:0017156">
    <property type="term" value="P:calcium-ion regulated exocytosis"/>
    <property type="evidence" value="ECO:0007669"/>
    <property type="project" value="Ensembl"/>
</dbReference>
<dbReference type="GO" id="GO:0098967">
    <property type="term" value="P:exocytic insertion of neurotransmitter receptor to postsynaptic membrane"/>
    <property type="evidence" value="ECO:0007669"/>
    <property type="project" value="TreeGrafter"/>
</dbReference>
<dbReference type="GO" id="GO:0030073">
    <property type="term" value="P:insulin secretion"/>
    <property type="evidence" value="ECO:0007669"/>
    <property type="project" value="Ensembl"/>
</dbReference>
<dbReference type="GO" id="GO:0006886">
    <property type="term" value="P:intracellular protein transport"/>
    <property type="evidence" value="ECO:0007669"/>
    <property type="project" value="InterPro"/>
</dbReference>
<dbReference type="GO" id="GO:2000463">
    <property type="term" value="P:positive regulation of excitatory postsynaptic potential"/>
    <property type="evidence" value="ECO:0007669"/>
    <property type="project" value="Ensembl"/>
</dbReference>
<dbReference type="GO" id="GO:0001956">
    <property type="term" value="P:positive regulation of neurotransmitter secretion"/>
    <property type="evidence" value="ECO:0007669"/>
    <property type="project" value="Ensembl"/>
</dbReference>
<dbReference type="GO" id="GO:0016925">
    <property type="term" value="P:protein sumoylation"/>
    <property type="evidence" value="ECO:0007669"/>
    <property type="project" value="Ensembl"/>
</dbReference>
<dbReference type="GO" id="GO:0010807">
    <property type="term" value="P:regulation of synaptic vesicle priming"/>
    <property type="evidence" value="ECO:0007669"/>
    <property type="project" value="Ensembl"/>
</dbReference>
<dbReference type="GO" id="GO:0048488">
    <property type="term" value="P:synaptic vesicle endocytosis"/>
    <property type="evidence" value="ECO:0007669"/>
    <property type="project" value="Ensembl"/>
</dbReference>
<dbReference type="GO" id="GO:0031629">
    <property type="term" value="P:synaptic vesicle fusion to presynaptic active zone membrane"/>
    <property type="evidence" value="ECO:0007669"/>
    <property type="project" value="TreeGrafter"/>
</dbReference>
<dbReference type="GO" id="GO:0048278">
    <property type="term" value="P:vesicle docking"/>
    <property type="evidence" value="ECO:0007669"/>
    <property type="project" value="Ensembl"/>
</dbReference>
<dbReference type="CDD" id="cd15880">
    <property type="entry name" value="SNARE_syntaxin1"/>
    <property type="match status" value="1"/>
</dbReference>
<dbReference type="CDD" id="cd00179">
    <property type="entry name" value="SynN"/>
    <property type="match status" value="1"/>
</dbReference>
<dbReference type="FunFam" id="1.20.58.70:FF:000042">
    <property type="entry name" value="Syntaxin 11b, tandem duplicate 2"/>
    <property type="match status" value="1"/>
</dbReference>
<dbReference type="FunFam" id="1.20.5.110:FF:000005">
    <property type="entry name" value="Syntaxin 1B"/>
    <property type="match status" value="1"/>
</dbReference>
<dbReference type="Gene3D" id="1.20.5.110">
    <property type="match status" value="1"/>
</dbReference>
<dbReference type="Gene3D" id="1.20.58.70">
    <property type="match status" value="1"/>
</dbReference>
<dbReference type="InterPro" id="IPR010989">
    <property type="entry name" value="SNARE"/>
</dbReference>
<dbReference type="InterPro" id="IPR045242">
    <property type="entry name" value="Syntaxin"/>
</dbReference>
<dbReference type="InterPro" id="IPR006012">
    <property type="entry name" value="Syntaxin/epimorphin_CS"/>
</dbReference>
<dbReference type="InterPro" id="IPR006011">
    <property type="entry name" value="Syntaxin_N"/>
</dbReference>
<dbReference type="InterPro" id="IPR000727">
    <property type="entry name" value="T_SNARE_dom"/>
</dbReference>
<dbReference type="PANTHER" id="PTHR19957">
    <property type="entry name" value="SYNTAXIN"/>
    <property type="match status" value="1"/>
</dbReference>
<dbReference type="PANTHER" id="PTHR19957:SF334">
    <property type="entry name" value="SYNTAXIN-1B"/>
    <property type="match status" value="1"/>
</dbReference>
<dbReference type="Pfam" id="PF05739">
    <property type="entry name" value="SNARE"/>
    <property type="match status" value="1"/>
</dbReference>
<dbReference type="Pfam" id="PF00804">
    <property type="entry name" value="Syntaxin"/>
    <property type="match status" value="1"/>
</dbReference>
<dbReference type="SMART" id="SM00503">
    <property type="entry name" value="SynN"/>
    <property type="match status" value="1"/>
</dbReference>
<dbReference type="SMART" id="SM00397">
    <property type="entry name" value="t_SNARE"/>
    <property type="match status" value="1"/>
</dbReference>
<dbReference type="SUPFAM" id="SSF47661">
    <property type="entry name" value="t-snare proteins"/>
    <property type="match status" value="1"/>
</dbReference>
<dbReference type="PROSITE" id="PS00914">
    <property type="entry name" value="SYNTAXIN"/>
    <property type="match status" value="1"/>
</dbReference>
<dbReference type="PROSITE" id="PS50192">
    <property type="entry name" value="T_SNARE"/>
    <property type="match status" value="1"/>
</dbReference>
<keyword id="KW-0175">Coiled coil</keyword>
<keyword id="KW-0472">Membrane</keyword>
<keyword id="KW-0532">Neurotransmitter transport</keyword>
<keyword id="KW-0597">Phosphoprotein</keyword>
<keyword id="KW-1185">Reference proteome</keyword>
<keyword id="KW-0812">Transmembrane</keyword>
<keyword id="KW-1133">Transmembrane helix</keyword>
<keyword id="KW-0813">Transport</keyword>
<protein>
    <recommendedName>
        <fullName>Syntaxin-1B</fullName>
    </recommendedName>
    <alternativeName>
        <fullName>Syntaxin-1B2</fullName>
    </alternativeName>
</protein>
<gene>
    <name type="primary">STX1B</name>
    <name type="synonym">STX1B2</name>
</gene>
<organism>
    <name type="scientific">Ovis aries</name>
    <name type="common">Sheep</name>
    <dbReference type="NCBI Taxonomy" id="9940"/>
    <lineage>
        <taxon>Eukaryota</taxon>
        <taxon>Metazoa</taxon>
        <taxon>Chordata</taxon>
        <taxon>Craniata</taxon>
        <taxon>Vertebrata</taxon>
        <taxon>Euteleostomi</taxon>
        <taxon>Mammalia</taxon>
        <taxon>Eutheria</taxon>
        <taxon>Laurasiatheria</taxon>
        <taxon>Artiodactyla</taxon>
        <taxon>Ruminantia</taxon>
        <taxon>Pecora</taxon>
        <taxon>Bovidae</taxon>
        <taxon>Caprinae</taxon>
        <taxon>Ovis</taxon>
    </lineage>
</organism>
<comment type="function">
    <text evidence="1">Potentially involved in docking of synaptic vesicles at presynaptic active zones. May mediate Ca(2+)-regulation of exocytosis acrosomal reaction in sperm (By similarity).</text>
</comment>
<comment type="subunit">
    <text evidence="1">Interacts with OTOF. Interacts with SYT6 and SYT8; the interaction is Ca(2+)-dependent (By similarity).</text>
</comment>
<comment type="subcellular location">
    <subcellularLocation>
        <location evidence="7">Membrane</location>
        <topology evidence="7">Single-pass type IV membrane protein</topology>
    </subcellularLocation>
</comment>
<comment type="PTM">
    <text evidence="1">Phosphorylated by CK2.</text>
</comment>
<comment type="similarity">
    <text evidence="7">Belongs to the syntaxin family.</text>
</comment>
<reference key="1">
    <citation type="submission" date="1998-07" db="EMBL/GenBank/DDBJ databases">
        <title>Cloning and sequence analysis of sheep syntaxin 1B.</title>
        <authorList>
            <person name="Helps C.R."/>
            <person name="Harbour D.A."/>
        </authorList>
    </citation>
    <scope>NUCLEOTIDE SEQUENCE [MRNA]</scope>
    <source>
        <tissue>Brain</tissue>
    </source>
</reference>
<proteinExistence type="evidence at transcript level"/>
<accession>P61268</accession>
<accession>P41414</accession>
<feature type="chain" id="PRO_0000210195" description="Syntaxin-1B">
    <location>
        <begin position="1"/>
        <end position="288"/>
    </location>
</feature>
<feature type="topological domain" description="Cytoplasmic" evidence="4">
    <location>
        <begin position="1"/>
        <end position="264"/>
    </location>
</feature>
<feature type="transmembrane region" description="Helical; Anchor for type IV membrane protein" evidence="4">
    <location>
        <begin position="265"/>
        <end position="288"/>
    </location>
</feature>
<feature type="domain" description="t-SNARE coiled-coil homology" evidence="5">
    <location>
        <begin position="191"/>
        <end position="253"/>
    </location>
</feature>
<feature type="region of interest" description="Disordered" evidence="6">
    <location>
        <begin position="1"/>
        <end position="20"/>
    </location>
</feature>
<feature type="coiled-coil region" evidence="4">
    <location>
        <begin position="29"/>
        <end position="104"/>
    </location>
</feature>
<feature type="compositionally biased region" description="Basic and acidic residues" evidence="6">
    <location>
        <begin position="1"/>
        <end position="13"/>
    </location>
</feature>
<feature type="modified residue" description="Phosphoserine" evidence="2">
    <location>
        <position position="10"/>
    </location>
</feature>
<feature type="modified residue" description="Phosphoserine" evidence="3">
    <location>
        <position position="14"/>
    </location>
</feature>
<name>STX1B_SHEEP</name>
<sequence>MKDRTQELRSAKDSDDEEEVVHVDRDHFMDEFFEQVEEIRGCIEKLSEDVEQVKKQHSAILAAPNPDEKTKQELEDLTTDIKKTANKVRSKLKAIEQSIEQEEGLNRSSADLRIRKTQHSTLSRKFVEVMTEYNATQSKYRDRCKDRIQRQLEITGRTTTNEELEDMLESGKLAIFTDDIKMDSQMTKQALNEIETRHNEIIKLETSIRELHDMFVDMAMLVESQGEMIDRIEYNVEHSVDYVERAVSDTKKAVKYQSKARRKKIMIIICCVVLGVVLASSIGGTLGL</sequence>
<evidence type="ECO:0000250" key="1"/>
<evidence type="ECO:0000250" key="2">
    <source>
        <dbReference type="UniProtKB" id="P61264"/>
    </source>
</evidence>
<evidence type="ECO:0000250" key="3">
    <source>
        <dbReference type="UniProtKB" id="P61266"/>
    </source>
</evidence>
<evidence type="ECO:0000255" key="4"/>
<evidence type="ECO:0000255" key="5">
    <source>
        <dbReference type="PROSITE-ProRule" id="PRU00202"/>
    </source>
</evidence>
<evidence type="ECO:0000256" key="6">
    <source>
        <dbReference type="SAM" id="MobiDB-lite"/>
    </source>
</evidence>
<evidence type="ECO:0000305" key="7"/>